<proteinExistence type="inferred from homology"/>
<name>TI214_PSINU</name>
<organism>
    <name type="scientific">Psilotum nudum</name>
    <name type="common">Whisk fern</name>
    <name type="synonym">Lycopodium nudum</name>
    <dbReference type="NCBI Taxonomy" id="3240"/>
    <lineage>
        <taxon>Eukaryota</taxon>
        <taxon>Viridiplantae</taxon>
        <taxon>Streptophyta</taxon>
        <taxon>Embryophyta</taxon>
        <taxon>Tracheophyta</taxon>
        <taxon>Polypodiopsida</taxon>
        <taxon>Ophioglossidae</taxon>
        <taxon>Psilotales</taxon>
        <taxon>Psilotaceae</taxon>
        <taxon>Psilotum</taxon>
    </lineage>
</organism>
<evidence type="ECO:0000250" key="1">
    <source>
        <dbReference type="UniProtKB" id="P56785"/>
    </source>
</evidence>
<evidence type="ECO:0000255" key="2"/>
<evidence type="ECO:0000256" key="3">
    <source>
        <dbReference type="SAM" id="MobiDB-lite"/>
    </source>
</evidence>
<evidence type="ECO:0000305" key="4"/>
<feature type="chain" id="PRO_0000262627" description="Protein TIC 214">
    <location>
        <begin position="1"/>
        <end position="1703"/>
    </location>
</feature>
<feature type="transmembrane region" description="Helical" evidence="2">
    <location>
        <begin position="39"/>
        <end position="61"/>
    </location>
</feature>
<feature type="transmembrane region" description="Helical" evidence="2">
    <location>
        <begin position="67"/>
        <end position="87"/>
    </location>
</feature>
<feature type="transmembrane region" description="Helical" evidence="2">
    <location>
        <begin position="90"/>
        <end position="110"/>
    </location>
</feature>
<feature type="transmembrane region" description="Helical" evidence="2">
    <location>
        <begin position="138"/>
        <end position="158"/>
    </location>
</feature>
<feature type="transmembrane region" description="Helical" evidence="2">
    <location>
        <begin position="174"/>
        <end position="194"/>
    </location>
</feature>
<feature type="transmembrane region" description="Helical" evidence="2">
    <location>
        <begin position="220"/>
        <end position="240"/>
    </location>
</feature>
<feature type="region of interest" description="Disordered" evidence="3">
    <location>
        <begin position="615"/>
        <end position="643"/>
    </location>
</feature>
<feature type="region of interest" description="Disordered" evidence="3">
    <location>
        <begin position="1431"/>
        <end position="1494"/>
    </location>
</feature>
<feature type="coiled-coil region" evidence="2">
    <location>
        <begin position="618"/>
        <end position="660"/>
    </location>
</feature>
<feature type="compositionally biased region" description="Basic and acidic residues" evidence="3">
    <location>
        <begin position="619"/>
        <end position="643"/>
    </location>
</feature>
<accession>Q8WHX1</accession>
<sequence length="1703" mass="203254">MIGRLYMKKLKNLFLFLSSLCPVFPWISQISLVMPFGLYYGFLTALPIGPSQILSIRTFFLEGNRSGIICILGSMMGQFVILLSIYCSPLYVMLVKPHLMTLLVIPYMFYYWYRTKNPSRYYILHPIKSLTHAHTRNLLLDSFIFQLLNPILLPNPVLTRLLNLFLFRYSSNVFFLTSSLLGWLCGHILFINSIKLLLFRIEHDSPIIYILMKRSISRTFSILISITFFLYLGRSPVPLITKKFADEITLSDQKIKENLWEESLWLYRPWPTSFFDQYRWNRPIRYIPNSKSSHNGFVKKQVSKFFYDECITDGKNAISFASQPSLSIFKKQLMNYLHNSDISISTKDSYKGWIETKREKRDALNNEFKDRIQFVYNSSTIEEAMENKTGFSHDRNHFLVKVNDPFLSGSSRIRIPNKKYSSSLLKLHDSKDQTMKISKKTKRKHTRNKMRNWIFNKHKKWQHNKFPLPWEPIPTKAEKVFWRILNESENPIILEMLTTLNSIKEKNYQFRITWEHIFQLPRIEKAIFLFRSKQEIEDSIFRYPSHLSLKNLTLFNIFTRSKNIFYSAKIAVSPILQIEEMQKELPRYNSRLRSDRIDAVNVDVDIRQRKIKNLGPRKGKLEDKEKEKEKAAQTQTEVKKEREKEKEERVIKRFQNQSDFRRKLVKGSIRARRRKTGIWRLYQSGTHSPFFLRMKEIPISFQSSINALRLNKMKDERAILGIGKELRPFNLYKKRSKADRLTIAARFDFPIAHAGRGVLLIIQSNIRKYVILPILIICKNIGRIMLFQSPEWKEDWAEWNQEIHIKCTYDGIEVSHRHLPAHWFKEGLQIKILYPFHLKPWHIHRTNNINDLRNEAQIQKEISDFGKQRKLSFSYLTIWGYQTSSVFGSMKKRPSFWRPIANALKKKLQRNLFSKLTWISHFFYEIILLSRTFIISKKPNNIPEMSIQSNELRYDVSDYELIQKYPNSNEKNDYVVMNEISIESNNRNGKEISHESQDQYKDNFNNIRSFNDIETLLTDISGTSVEESYRDRIETYLRLNKKNHRYAINIRLIWNKQLVQTQQEFSRFRRIIMQFMHKGYRLAKRFLTKFYREIFRRFTFSIQLSIQLVLRLTKNITKLSEKNKVYQNLNLLKKNEQNLKIDSSRNKPVLSQAYVFQKLWHARTRTKIDVHYLVQSLEREIVNSIENNELKASKLKDLKWNEHNYLNDHIKDLLEIQGLLKETQTFTEKNWKEWLHCFTRYQISSKIEYGIVPQKWKNEVKKRWKSNTNKLDKNKEYKTLEKENKYSLYETNNMLKQRINNRNNYCEFYNLLYSFIDSTKASNIIKLPIQQKGKEDPIQYINDINKIHENIHLNSKKKYKRPQFQSISTEKGDIDSNLMLWLLPNLLDTKPESVTNSLDSYSFEMYLSQNEDKDSLKKEIRFNAKKLNLDTKEPTSDAMKPTSDTKELISDTNEPTSDIKSDDQSENQNKPLKEKSIRERKHHRPIPQVKWKSKSVEKKMQRINNLTSFLSVIEDRKNMENYIISFCMKMGIDIDLLNSFFTNTEDELSIQLLDDSAHRLPRLLNDQTLVRKMVSILLNFEKQFEEGITSKISSQSISSIYRTEKKYSVNSYNLEDIMLSRRYRELRILNSLILEKQYVNFDHWIDKSEKYPFLNLPSQVQIIKRFLWPTYRLEDLACMNRFWFNTNNGSRFAMLKLRMYCPD</sequence>
<comment type="function">
    <text evidence="1">Involved in protein precursor import into chloroplasts. May be part of an intermediate translocation complex acting as a protein-conducting channel at the inner envelope.</text>
</comment>
<comment type="subunit">
    <text evidence="1">Part of the Tic complex.</text>
</comment>
<comment type="subcellular location">
    <subcellularLocation>
        <location evidence="1">Plastid</location>
        <location evidence="1">Chloroplast inner membrane</location>
        <topology evidence="2">Multi-pass membrane protein</topology>
    </subcellularLocation>
</comment>
<comment type="similarity">
    <text evidence="4">Belongs to the TIC214 family.</text>
</comment>
<gene>
    <name evidence="1" type="primary">TIC214</name>
    <name type="synonym">ycf1</name>
</gene>
<dbReference type="EMBL" id="AP004638">
    <property type="protein sequence ID" value="BAB84282.1"/>
    <property type="molecule type" value="Genomic_DNA"/>
</dbReference>
<dbReference type="RefSeq" id="NP_569693.1">
    <property type="nucleotide sequence ID" value="NC_003386.1"/>
</dbReference>
<dbReference type="GeneID" id="2545230"/>
<dbReference type="GO" id="GO:0009706">
    <property type="term" value="C:chloroplast inner membrane"/>
    <property type="evidence" value="ECO:0007669"/>
    <property type="project" value="UniProtKB-SubCell"/>
</dbReference>
<dbReference type="GO" id="GO:0015031">
    <property type="term" value="P:protein transport"/>
    <property type="evidence" value="ECO:0007669"/>
    <property type="project" value="UniProtKB-KW"/>
</dbReference>
<dbReference type="InterPro" id="IPR008896">
    <property type="entry name" value="TIC214"/>
</dbReference>
<dbReference type="PANTHER" id="PTHR33163:SF40">
    <property type="entry name" value="PROTEIN TIC 214"/>
    <property type="match status" value="1"/>
</dbReference>
<dbReference type="PANTHER" id="PTHR33163">
    <property type="entry name" value="PROTEIN TIC 214-RELATED"/>
    <property type="match status" value="1"/>
</dbReference>
<dbReference type="Pfam" id="PF05758">
    <property type="entry name" value="Ycf1"/>
    <property type="match status" value="3"/>
</dbReference>
<keyword id="KW-0150">Chloroplast</keyword>
<keyword id="KW-0175">Coiled coil</keyword>
<keyword id="KW-0472">Membrane</keyword>
<keyword id="KW-0934">Plastid</keyword>
<keyword id="KW-1001">Plastid inner membrane</keyword>
<keyword id="KW-0653">Protein transport</keyword>
<keyword id="KW-0812">Transmembrane</keyword>
<keyword id="KW-1133">Transmembrane helix</keyword>
<keyword id="KW-0813">Transport</keyword>
<reference key="1">
    <citation type="journal article" date="2004" name="Mol. Biol. Evol.">
        <title>Chloroplast phylogeny indicates that bryophytes are monophyletic.</title>
        <authorList>
            <person name="Nishiyama T."/>
            <person name="Wolf P.G."/>
            <person name="Kugita M."/>
            <person name="Sinclair R.B."/>
            <person name="Sugita M."/>
            <person name="Sugiura C."/>
            <person name="Wakasugi T."/>
            <person name="Yamada K."/>
            <person name="Yoshinaga K."/>
            <person name="Yamaguchi K."/>
            <person name="Ueda K."/>
            <person name="Hasebe M."/>
        </authorList>
    </citation>
    <scope>NUCLEOTIDE SEQUENCE [LARGE SCALE GENOMIC DNA]</scope>
    <source>
        <strain>Kingyoku</strain>
    </source>
</reference>
<geneLocation type="chloroplast"/>
<protein>
    <recommendedName>
        <fullName evidence="1">Protein TIC 214</fullName>
    </recommendedName>
    <alternativeName>
        <fullName evidence="1">Translocon at the inner envelope membrane of chloroplasts 214</fullName>
        <shortName evidence="1">AtTIC214</shortName>
    </alternativeName>
</protein>